<comment type="function">
    <text evidence="1">Potassium channel regulatory subunit that modulates the delayed rectifier potassium channel activity of KCNB1 by namely slowing down the deactivation and inactivation time constants. While it does not form functional channel on its own, it can form functional heterotetrameric channels with KCNB1.</text>
</comment>
<comment type="subunit">
    <text evidence="1 3">Heterotetramer with KCNB1 (By similarity). Does not form homomultimers (By similarity).</text>
</comment>
<comment type="subcellular location">
    <subcellularLocation>
        <location evidence="3">Cell membrane</location>
        <topology evidence="3">Multi-pass membrane protein</topology>
    </subcellularLocation>
    <text evidence="3">May not reach the plasma membrane but remain in an intracellular compartment in the absence of KCNB1.</text>
</comment>
<comment type="domain">
    <text evidence="2">The transmembrane segment S4 functions as a voltage-sensor and is characterized by a series of positively charged amino acids at every third position. Channel opening and closing is effected by a conformation change that affects the position and orientation of the voltage-sensor paddle formed by S3 and S4 within the membrane. A transmembrane electric field that is positive inside would push the positively charged S4 segment outwards, thereby opening the pore, while a field that is negative inside would pull the S4 segment inwards and close the pore. Changes in the position and orientation of S4 are then transmitted to the activation gate formed by the inner helix bundle via the S4-S5 linker region.</text>
</comment>
<comment type="similarity">
    <text evidence="4">Belongs to the potassium channel family. S (TC 1.A.1.2) subfamily. Kv9.3/KCNS3 sub-subfamily.</text>
</comment>
<proteinExistence type="evidence at transcript level"/>
<keyword id="KW-1003">Cell membrane</keyword>
<keyword id="KW-0407">Ion channel</keyword>
<keyword id="KW-0406">Ion transport</keyword>
<keyword id="KW-0472">Membrane</keyword>
<keyword id="KW-0630">Potassium</keyword>
<keyword id="KW-0631">Potassium channel</keyword>
<keyword id="KW-0633">Potassium transport</keyword>
<keyword id="KW-1185">Reference proteome</keyword>
<keyword id="KW-0812">Transmembrane</keyword>
<keyword id="KW-1133">Transmembrane helix</keyword>
<keyword id="KW-0813">Transport</keyword>
<keyword id="KW-0851">Voltage-gated channel</keyword>
<reference key="1">
    <citation type="journal article" date="2005" name="Science">
        <title>The transcriptional landscape of the mammalian genome.</title>
        <authorList>
            <person name="Carninci P."/>
            <person name="Kasukawa T."/>
            <person name="Katayama S."/>
            <person name="Gough J."/>
            <person name="Frith M.C."/>
            <person name="Maeda N."/>
            <person name="Oyama R."/>
            <person name="Ravasi T."/>
            <person name="Lenhard B."/>
            <person name="Wells C."/>
            <person name="Kodzius R."/>
            <person name="Shimokawa K."/>
            <person name="Bajic V.B."/>
            <person name="Brenner S.E."/>
            <person name="Batalov S."/>
            <person name="Forrest A.R."/>
            <person name="Zavolan M."/>
            <person name="Davis M.J."/>
            <person name="Wilming L.G."/>
            <person name="Aidinis V."/>
            <person name="Allen J.E."/>
            <person name="Ambesi-Impiombato A."/>
            <person name="Apweiler R."/>
            <person name="Aturaliya R.N."/>
            <person name="Bailey T.L."/>
            <person name="Bansal M."/>
            <person name="Baxter L."/>
            <person name="Beisel K.W."/>
            <person name="Bersano T."/>
            <person name="Bono H."/>
            <person name="Chalk A.M."/>
            <person name="Chiu K.P."/>
            <person name="Choudhary V."/>
            <person name="Christoffels A."/>
            <person name="Clutterbuck D.R."/>
            <person name="Crowe M.L."/>
            <person name="Dalla E."/>
            <person name="Dalrymple B.P."/>
            <person name="de Bono B."/>
            <person name="Della Gatta G."/>
            <person name="di Bernardo D."/>
            <person name="Down T."/>
            <person name="Engstrom P."/>
            <person name="Fagiolini M."/>
            <person name="Faulkner G."/>
            <person name="Fletcher C.F."/>
            <person name="Fukushima T."/>
            <person name="Furuno M."/>
            <person name="Futaki S."/>
            <person name="Gariboldi M."/>
            <person name="Georgii-Hemming P."/>
            <person name="Gingeras T.R."/>
            <person name="Gojobori T."/>
            <person name="Green R.E."/>
            <person name="Gustincich S."/>
            <person name="Harbers M."/>
            <person name="Hayashi Y."/>
            <person name="Hensch T.K."/>
            <person name="Hirokawa N."/>
            <person name="Hill D."/>
            <person name="Huminiecki L."/>
            <person name="Iacono M."/>
            <person name="Ikeo K."/>
            <person name="Iwama A."/>
            <person name="Ishikawa T."/>
            <person name="Jakt M."/>
            <person name="Kanapin A."/>
            <person name="Katoh M."/>
            <person name="Kawasawa Y."/>
            <person name="Kelso J."/>
            <person name="Kitamura H."/>
            <person name="Kitano H."/>
            <person name="Kollias G."/>
            <person name="Krishnan S.P."/>
            <person name="Kruger A."/>
            <person name="Kummerfeld S.K."/>
            <person name="Kurochkin I.V."/>
            <person name="Lareau L.F."/>
            <person name="Lazarevic D."/>
            <person name="Lipovich L."/>
            <person name="Liu J."/>
            <person name="Liuni S."/>
            <person name="McWilliam S."/>
            <person name="Madan Babu M."/>
            <person name="Madera M."/>
            <person name="Marchionni L."/>
            <person name="Matsuda H."/>
            <person name="Matsuzawa S."/>
            <person name="Miki H."/>
            <person name="Mignone F."/>
            <person name="Miyake S."/>
            <person name="Morris K."/>
            <person name="Mottagui-Tabar S."/>
            <person name="Mulder N."/>
            <person name="Nakano N."/>
            <person name="Nakauchi H."/>
            <person name="Ng P."/>
            <person name="Nilsson R."/>
            <person name="Nishiguchi S."/>
            <person name="Nishikawa S."/>
            <person name="Nori F."/>
            <person name="Ohara O."/>
            <person name="Okazaki Y."/>
            <person name="Orlando V."/>
            <person name="Pang K.C."/>
            <person name="Pavan W.J."/>
            <person name="Pavesi G."/>
            <person name="Pesole G."/>
            <person name="Petrovsky N."/>
            <person name="Piazza S."/>
            <person name="Reed J."/>
            <person name="Reid J.F."/>
            <person name="Ring B.Z."/>
            <person name="Ringwald M."/>
            <person name="Rost B."/>
            <person name="Ruan Y."/>
            <person name="Salzberg S.L."/>
            <person name="Sandelin A."/>
            <person name="Schneider C."/>
            <person name="Schoenbach C."/>
            <person name="Sekiguchi K."/>
            <person name="Semple C.A."/>
            <person name="Seno S."/>
            <person name="Sessa L."/>
            <person name="Sheng Y."/>
            <person name="Shibata Y."/>
            <person name="Shimada H."/>
            <person name="Shimada K."/>
            <person name="Silva D."/>
            <person name="Sinclair B."/>
            <person name="Sperling S."/>
            <person name="Stupka E."/>
            <person name="Sugiura K."/>
            <person name="Sultana R."/>
            <person name="Takenaka Y."/>
            <person name="Taki K."/>
            <person name="Tammoja K."/>
            <person name="Tan S.L."/>
            <person name="Tang S."/>
            <person name="Taylor M.S."/>
            <person name="Tegner J."/>
            <person name="Teichmann S.A."/>
            <person name="Ueda H.R."/>
            <person name="van Nimwegen E."/>
            <person name="Verardo R."/>
            <person name="Wei C.L."/>
            <person name="Yagi K."/>
            <person name="Yamanishi H."/>
            <person name="Zabarovsky E."/>
            <person name="Zhu S."/>
            <person name="Zimmer A."/>
            <person name="Hide W."/>
            <person name="Bult C."/>
            <person name="Grimmond S.M."/>
            <person name="Teasdale R.D."/>
            <person name="Liu E.T."/>
            <person name="Brusic V."/>
            <person name="Quackenbush J."/>
            <person name="Wahlestedt C."/>
            <person name="Mattick J.S."/>
            <person name="Hume D.A."/>
            <person name="Kai C."/>
            <person name="Sasaki D."/>
            <person name="Tomaru Y."/>
            <person name="Fukuda S."/>
            <person name="Kanamori-Katayama M."/>
            <person name="Suzuki M."/>
            <person name="Aoki J."/>
            <person name="Arakawa T."/>
            <person name="Iida J."/>
            <person name="Imamura K."/>
            <person name="Itoh M."/>
            <person name="Kato T."/>
            <person name="Kawaji H."/>
            <person name="Kawagashira N."/>
            <person name="Kawashima T."/>
            <person name="Kojima M."/>
            <person name="Kondo S."/>
            <person name="Konno H."/>
            <person name="Nakano K."/>
            <person name="Ninomiya N."/>
            <person name="Nishio T."/>
            <person name="Okada M."/>
            <person name="Plessy C."/>
            <person name="Shibata K."/>
            <person name="Shiraki T."/>
            <person name="Suzuki S."/>
            <person name="Tagami M."/>
            <person name="Waki K."/>
            <person name="Watahiki A."/>
            <person name="Okamura-Oho Y."/>
            <person name="Suzuki H."/>
            <person name="Kawai J."/>
            <person name="Hayashizaki Y."/>
        </authorList>
    </citation>
    <scope>NUCLEOTIDE SEQUENCE [LARGE SCALE MRNA]</scope>
    <source>
        <strain>C57BL/6J</strain>
        <tissue>Corpora quadrigemina</tissue>
        <tissue>Spinal cord</tissue>
    </source>
</reference>
<reference key="2">
    <citation type="journal article" date="2004" name="Genome Res.">
        <title>The status, quality, and expansion of the NIH full-length cDNA project: the Mammalian Gene Collection (MGC).</title>
        <authorList>
            <consortium name="The MGC Project Team"/>
        </authorList>
    </citation>
    <scope>NUCLEOTIDE SEQUENCE [LARGE SCALE MRNA]</scope>
    <source>
        <tissue>Brain</tissue>
    </source>
</reference>
<feature type="chain" id="PRO_0000320143" description="Delayed-rectifier potassium channel regulatory subunit KCNS3">
    <location>
        <begin position="1"/>
        <end position="491"/>
    </location>
</feature>
<feature type="topological domain" description="Cytoplasmic" evidence="2">
    <location>
        <begin position="1"/>
        <end position="182"/>
    </location>
</feature>
<feature type="transmembrane region" description="Helical; Name=Segment S1" evidence="2">
    <location>
        <begin position="183"/>
        <end position="204"/>
    </location>
</feature>
<feature type="topological domain" description="Extracellular" evidence="2">
    <location>
        <begin position="205"/>
        <end position="220"/>
    </location>
</feature>
<feature type="transmembrane region" description="Helical; Name=Segment S2" evidence="2">
    <location>
        <begin position="221"/>
        <end position="243"/>
    </location>
</feature>
<feature type="topological domain" description="Cytoplasmic" evidence="2">
    <location>
        <begin position="244"/>
        <end position="254"/>
    </location>
</feature>
<feature type="transmembrane region" description="Helical; Name=Segment S3" evidence="2">
    <location>
        <begin position="255"/>
        <end position="275"/>
    </location>
</feature>
<feature type="topological domain" description="Extracellular" evidence="2">
    <location>
        <begin position="276"/>
        <end position="285"/>
    </location>
</feature>
<feature type="transmembrane region" description="Helical; Voltage-sensor; Name=Segment S4" evidence="2">
    <location>
        <begin position="286"/>
        <end position="306"/>
    </location>
</feature>
<feature type="topological domain" description="Cytoplasmic" evidence="2">
    <location>
        <begin position="307"/>
        <end position="321"/>
    </location>
</feature>
<feature type="transmembrane region" description="Helical; Name=Segment S5" evidence="2">
    <location>
        <begin position="322"/>
        <end position="343"/>
    </location>
</feature>
<feature type="topological domain" description="Extracellular" evidence="2">
    <location>
        <begin position="344"/>
        <end position="357"/>
    </location>
</feature>
<feature type="intramembrane region" description="Helical; Name=Pore helix" evidence="2">
    <location>
        <begin position="358"/>
        <end position="369"/>
    </location>
</feature>
<feature type="intramembrane region" evidence="2">
    <location>
        <begin position="370"/>
        <end position="377"/>
    </location>
</feature>
<feature type="topological domain" description="Extracellular" evidence="2">
    <location>
        <begin position="378"/>
        <end position="384"/>
    </location>
</feature>
<feature type="transmembrane region" description="Helical; Name=Segment S6" evidence="2">
    <location>
        <begin position="385"/>
        <end position="413"/>
    </location>
</feature>
<feature type="topological domain" description="Cytoplasmic" evidence="2">
    <location>
        <begin position="414"/>
        <end position="491"/>
    </location>
</feature>
<feature type="short sequence motif" description="Selectivity filter" evidence="2">
    <location>
        <begin position="370"/>
        <end position="375"/>
    </location>
</feature>
<protein>
    <recommendedName>
        <fullName evidence="4">Delayed-rectifier potassium channel regulatory subunit KCNS3</fullName>
    </recommendedName>
    <alternativeName>
        <fullName evidence="1">Delayed-rectifier potassium channel subunit Kv9.3</fullName>
    </alternativeName>
    <alternativeName>
        <fullName>Potassium voltage-gated channel subfamily S member 3</fullName>
    </alternativeName>
</protein>
<organism>
    <name type="scientific">Mus musculus</name>
    <name type="common">Mouse</name>
    <dbReference type="NCBI Taxonomy" id="10090"/>
    <lineage>
        <taxon>Eukaryota</taxon>
        <taxon>Metazoa</taxon>
        <taxon>Chordata</taxon>
        <taxon>Craniata</taxon>
        <taxon>Vertebrata</taxon>
        <taxon>Euteleostomi</taxon>
        <taxon>Mammalia</taxon>
        <taxon>Eutheria</taxon>
        <taxon>Euarchontoglires</taxon>
        <taxon>Glires</taxon>
        <taxon>Rodentia</taxon>
        <taxon>Myomorpha</taxon>
        <taxon>Muroidea</taxon>
        <taxon>Muridae</taxon>
        <taxon>Murinae</taxon>
        <taxon>Mus</taxon>
        <taxon>Mus</taxon>
    </lineage>
</organism>
<gene>
    <name evidence="5" type="primary">Kcns3</name>
</gene>
<evidence type="ECO:0000250" key="1">
    <source>
        <dbReference type="UniProtKB" id="O88759"/>
    </source>
</evidence>
<evidence type="ECO:0000250" key="2">
    <source>
        <dbReference type="UniProtKB" id="P63142"/>
    </source>
</evidence>
<evidence type="ECO:0000250" key="3">
    <source>
        <dbReference type="UniProtKB" id="Q9BQ31"/>
    </source>
</evidence>
<evidence type="ECO:0000305" key="4"/>
<evidence type="ECO:0000312" key="5">
    <source>
        <dbReference type="MGI" id="MGI:1098804"/>
    </source>
</evidence>
<dbReference type="EMBL" id="AK046054">
    <property type="protein sequence ID" value="BAC32583.1"/>
    <property type="molecule type" value="mRNA"/>
</dbReference>
<dbReference type="EMBL" id="AK162957">
    <property type="protein sequence ID" value="BAE37134.1"/>
    <property type="molecule type" value="mRNA"/>
</dbReference>
<dbReference type="EMBL" id="BC132164">
    <property type="protein sequence ID" value="AAI32165.1"/>
    <property type="molecule type" value="mRNA"/>
</dbReference>
<dbReference type="EMBL" id="BC132464">
    <property type="protein sequence ID" value="AAI32465.1"/>
    <property type="molecule type" value="mRNA"/>
</dbReference>
<dbReference type="CCDS" id="CCDS25813.1"/>
<dbReference type="RefSeq" id="NP_001162036.1">
    <property type="nucleotide sequence ID" value="NM_001168564.2"/>
</dbReference>
<dbReference type="RefSeq" id="NP_001400183.1">
    <property type="nucleotide sequence ID" value="NM_001413254.1"/>
</dbReference>
<dbReference type="RefSeq" id="NP_001400184.1">
    <property type="nucleotide sequence ID" value="NM_001413255.1"/>
</dbReference>
<dbReference type="RefSeq" id="NP_001400185.1">
    <property type="nucleotide sequence ID" value="NM_001413256.1"/>
</dbReference>
<dbReference type="RefSeq" id="NP_001400186.1">
    <property type="nucleotide sequence ID" value="NM_001413257.1"/>
</dbReference>
<dbReference type="RefSeq" id="NP_001400187.1">
    <property type="nucleotide sequence ID" value="NM_001413258.1"/>
</dbReference>
<dbReference type="RefSeq" id="NP_001400188.1">
    <property type="nucleotide sequence ID" value="NM_001413259.1"/>
</dbReference>
<dbReference type="RefSeq" id="NP_775593.1">
    <property type="nucleotide sequence ID" value="NM_173417.4"/>
</dbReference>
<dbReference type="RefSeq" id="XP_006515143.1">
    <property type="nucleotide sequence ID" value="XM_006515080.4"/>
</dbReference>
<dbReference type="RefSeq" id="XP_011242164.1">
    <property type="nucleotide sequence ID" value="XM_011243862.1"/>
</dbReference>
<dbReference type="RefSeq" id="XP_011242165.1">
    <property type="nucleotide sequence ID" value="XM_011243863.2"/>
</dbReference>
<dbReference type="RefSeq" id="XP_011242166.1">
    <property type="nucleotide sequence ID" value="XM_011243864.1"/>
</dbReference>
<dbReference type="RefSeq" id="XP_011242167.1">
    <property type="nucleotide sequence ID" value="XM_011243865.2"/>
</dbReference>
<dbReference type="RefSeq" id="XP_011242168.1">
    <property type="nucleotide sequence ID" value="XM_011243866.3"/>
</dbReference>
<dbReference type="SMR" id="Q8BQZ8"/>
<dbReference type="FunCoup" id="Q8BQZ8">
    <property type="interactions" value="31"/>
</dbReference>
<dbReference type="STRING" id="10090.ENSMUSP00000060706"/>
<dbReference type="PaxDb" id="10090-ENSMUSP00000060706"/>
<dbReference type="Antibodypedia" id="3102">
    <property type="antibodies" value="117 antibodies from 24 providers"/>
</dbReference>
<dbReference type="DNASU" id="238076"/>
<dbReference type="Ensembl" id="ENSMUST00000055673.2">
    <property type="protein sequence ID" value="ENSMUSP00000060706.2"/>
    <property type="gene ID" value="ENSMUSG00000043673.12"/>
</dbReference>
<dbReference type="Ensembl" id="ENSMUST00000164495.9">
    <property type="protein sequence ID" value="ENSMUSP00000129412.2"/>
    <property type="gene ID" value="ENSMUSG00000043673.12"/>
</dbReference>
<dbReference type="Ensembl" id="ENSMUST00000217974.2">
    <property type="protein sequence ID" value="ENSMUSP00000152026.2"/>
    <property type="gene ID" value="ENSMUSG00000043673.12"/>
</dbReference>
<dbReference type="GeneID" id="238076"/>
<dbReference type="KEGG" id="mmu:238076"/>
<dbReference type="UCSC" id="uc007nas.1">
    <property type="organism name" value="mouse"/>
</dbReference>
<dbReference type="AGR" id="MGI:1098804"/>
<dbReference type="CTD" id="3790"/>
<dbReference type="MGI" id="MGI:1098804">
    <property type="gene designation" value="Kcns3"/>
</dbReference>
<dbReference type="VEuPathDB" id="HostDB:ENSMUSG00000043673"/>
<dbReference type="eggNOG" id="KOG3713">
    <property type="taxonomic scope" value="Eukaryota"/>
</dbReference>
<dbReference type="GeneTree" id="ENSGT00940000155979"/>
<dbReference type="HOGENOM" id="CLU_011722_4_1_1"/>
<dbReference type="InParanoid" id="Q8BQZ8"/>
<dbReference type="OMA" id="CQELPYF"/>
<dbReference type="OrthoDB" id="296522at2759"/>
<dbReference type="PhylomeDB" id="Q8BQZ8"/>
<dbReference type="TreeFam" id="TF313103"/>
<dbReference type="Reactome" id="R-MMU-1296072">
    <property type="pathway name" value="Voltage gated Potassium channels"/>
</dbReference>
<dbReference type="Reactome" id="R-MMU-381676">
    <property type="pathway name" value="Glucagon-like Peptide-1 (GLP1) regulates insulin secretion"/>
</dbReference>
<dbReference type="BioGRID-ORCS" id="238076">
    <property type="hits" value="2 hits in 77 CRISPR screens"/>
</dbReference>
<dbReference type="PRO" id="PR:Q8BQZ8"/>
<dbReference type="Proteomes" id="UP000000589">
    <property type="component" value="Chromosome 12"/>
</dbReference>
<dbReference type="RNAct" id="Q8BQZ8">
    <property type="molecule type" value="protein"/>
</dbReference>
<dbReference type="Bgee" id="ENSMUSG00000043673">
    <property type="expression patterns" value="Expressed in lumbar dorsal root ganglion and 61 other cell types or tissues"/>
</dbReference>
<dbReference type="GO" id="GO:0005829">
    <property type="term" value="C:cytosol"/>
    <property type="evidence" value="ECO:0007669"/>
    <property type="project" value="Ensembl"/>
</dbReference>
<dbReference type="GO" id="GO:0005794">
    <property type="term" value="C:Golgi apparatus"/>
    <property type="evidence" value="ECO:0007669"/>
    <property type="project" value="Ensembl"/>
</dbReference>
<dbReference type="GO" id="GO:0008076">
    <property type="term" value="C:voltage-gated potassium channel complex"/>
    <property type="evidence" value="ECO:0007669"/>
    <property type="project" value="InterPro"/>
</dbReference>
<dbReference type="GO" id="GO:0005249">
    <property type="term" value="F:voltage-gated potassium channel activity"/>
    <property type="evidence" value="ECO:0007669"/>
    <property type="project" value="InterPro"/>
</dbReference>
<dbReference type="GO" id="GO:0051260">
    <property type="term" value="P:protein homooligomerization"/>
    <property type="evidence" value="ECO:0007669"/>
    <property type="project" value="InterPro"/>
</dbReference>
<dbReference type="CDD" id="cd18428">
    <property type="entry name" value="BTB_POZ_KCNS3"/>
    <property type="match status" value="1"/>
</dbReference>
<dbReference type="FunFam" id="1.10.287.70:FF:000005">
    <property type="entry name" value="potassium voltage-gated channel subfamily G member 1"/>
    <property type="match status" value="1"/>
</dbReference>
<dbReference type="FunFam" id="3.30.710.10:FF:000029">
    <property type="entry name" value="potassium voltage-gated channel subfamily S member 2"/>
    <property type="match status" value="1"/>
</dbReference>
<dbReference type="FunFam" id="1.20.120.350:FF:000045">
    <property type="entry name" value="Potassium voltage-gated channel subfamily S member 3"/>
    <property type="match status" value="1"/>
</dbReference>
<dbReference type="Gene3D" id="1.10.287.70">
    <property type="match status" value="1"/>
</dbReference>
<dbReference type="Gene3D" id="3.30.710.10">
    <property type="entry name" value="Potassium Channel Kv1.1, Chain A"/>
    <property type="match status" value="1"/>
</dbReference>
<dbReference type="Gene3D" id="1.20.120.350">
    <property type="entry name" value="Voltage-gated potassium channels. Chain C"/>
    <property type="match status" value="1"/>
</dbReference>
<dbReference type="InterPro" id="IPR000210">
    <property type="entry name" value="BTB/POZ_dom"/>
</dbReference>
<dbReference type="InterPro" id="IPR005821">
    <property type="entry name" value="Ion_trans_dom"/>
</dbReference>
<dbReference type="InterPro" id="IPR003968">
    <property type="entry name" value="K_chnl_volt-dep_Kv"/>
</dbReference>
<dbReference type="InterPro" id="IPR003971">
    <property type="entry name" value="K_chnl_volt-dep_Kv5/Kv9"/>
</dbReference>
<dbReference type="InterPro" id="IPR011333">
    <property type="entry name" value="SKP1/BTB/POZ_sf"/>
</dbReference>
<dbReference type="InterPro" id="IPR003131">
    <property type="entry name" value="T1-type_BTB"/>
</dbReference>
<dbReference type="InterPro" id="IPR028325">
    <property type="entry name" value="VG_K_chnl"/>
</dbReference>
<dbReference type="InterPro" id="IPR027359">
    <property type="entry name" value="Volt_channel_dom_sf"/>
</dbReference>
<dbReference type="PANTHER" id="PTHR11537:SF39">
    <property type="entry name" value="POTASSIUM VOLTAGE-GATED CHANNEL SUBFAMILY S MEMBER 3"/>
    <property type="match status" value="1"/>
</dbReference>
<dbReference type="PANTHER" id="PTHR11537">
    <property type="entry name" value="VOLTAGE-GATED POTASSIUM CHANNEL"/>
    <property type="match status" value="1"/>
</dbReference>
<dbReference type="Pfam" id="PF02214">
    <property type="entry name" value="BTB_2"/>
    <property type="match status" value="1"/>
</dbReference>
<dbReference type="Pfam" id="PF00520">
    <property type="entry name" value="Ion_trans"/>
    <property type="match status" value="1"/>
</dbReference>
<dbReference type="PRINTS" id="PR00169">
    <property type="entry name" value="KCHANNEL"/>
</dbReference>
<dbReference type="PRINTS" id="PR01494">
    <property type="entry name" value="KV9CHANNEL"/>
</dbReference>
<dbReference type="PRINTS" id="PR01491">
    <property type="entry name" value="KVCHANNEL"/>
</dbReference>
<dbReference type="SMART" id="SM00225">
    <property type="entry name" value="BTB"/>
    <property type="match status" value="1"/>
</dbReference>
<dbReference type="SUPFAM" id="SSF54695">
    <property type="entry name" value="POZ domain"/>
    <property type="match status" value="1"/>
</dbReference>
<dbReference type="SUPFAM" id="SSF81324">
    <property type="entry name" value="Voltage-gated potassium channels"/>
    <property type="match status" value="1"/>
</dbReference>
<name>KCNS3_MOUSE</name>
<accession>Q8BQZ8</accession>
<sequence length="491" mass="55993">MVFGEFFHRPGQDEELVNLNVGGFKQSVDQSTLLRFPHTRLGKLLTCHSEEAILELCDDYSVADKEYYFDRNPFLFRYVLNFYYTGKLHVMEELCVFSFCQEIEYWGINELFIDSCCSSRYQERKEESHDKDWDQKSNDVSTDSSFEESSLFEKELEKFDELRFGQLRKKIWIRMENPAYCLSAKLIAISSLSVVLASIVAMCVHSMSEFQNEDGEVDDPVLEGVEIACIAWFTGELAIRLVAAPSQKKFWKNPLNIIDFVSIIPFYATLAVDTKEEESEDIENMGKVVQILRLMRIFRILKLARHSVGLRSLGATLRHSYHEVGLLLLFLSVGISIFSVLIYSVEKDEHKSSLTSIPICWWWATISMTTVGYGDTHPVTLAGKIIASTCIICGILVVALPITIIFNKFSKYYQKQKDMEVDQCSEDPPEKCHELPYFNIRDVYAQQVHAFITSLSSIGIVVSDPDSTDASSVEDNEDAYNTASLENCTGK</sequence>